<feature type="chain" id="PRO_0000339032" description="ATP synthase subunit alpha 2">
    <location>
        <begin position="1"/>
        <end position="512"/>
    </location>
</feature>
<feature type="binding site" evidence="2">
    <location>
        <begin position="169"/>
        <end position="176"/>
    </location>
    <ligand>
        <name>ATP</name>
        <dbReference type="ChEBI" id="CHEBI:30616"/>
    </ligand>
</feature>
<feature type="site" description="Required for activity" evidence="2">
    <location>
        <position position="372"/>
    </location>
</feature>
<keyword id="KW-0066">ATP synthesis</keyword>
<keyword id="KW-0067">ATP-binding</keyword>
<keyword id="KW-0997">Cell inner membrane</keyword>
<keyword id="KW-1003">Cell membrane</keyword>
<keyword id="KW-0139">CF(1)</keyword>
<keyword id="KW-0375">Hydrogen ion transport</keyword>
<keyword id="KW-0406">Ion transport</keyword>
<keyword id="KW-0472">Membrane</keyword>
<keyword id="KW-0547">Nucleotide-binding</keyword>
<keyword id="KW-1185">Reference proteome</keyword>
<keyword id="KW-1278">Translocase</keyword>
<keyword id="KW-0813">Transport</keyword>
<protein>
    <recommendedName>
        <fullName evidence="2">ATP synthase subunit alpha 2</fullName>
        <ecNumber evidence="2">7.1.2.2</ecNumber>
    </recommendedName>
    <alternativeName>
        <fullName evidence="2">ATP synthase F1 sector subunit alpha 2</fullName>
    </alternativeName>
    <alternativeName>
        <fullName evidence="2">F-ATPase subunit alpha 2</fullName>
    </alternativeName>
</protein>
<gene>
    <name evidence="2" type="primary">atpA2</name>
    <name type="ordered locus">Dshi_2936</name>
</gene>
<accession>A8LJR6</accession>
<organism>
    <name type="scientific">Dinoroseobacter shibae (strain DSM 16493 / NCIMB 14021 / DFL 12)</name>
    <dbReference type="NCBI Taxonomy" id="398580"/>
    <lineage>
        <taxon>Bacteria</taxon>
        <taxon>Pseudomonadati</taxon>
        <taxon>Pseudomonadota</taxon>
        <taxon>Alphaproteobacteria</taxon>
        <taxon>Rhodobacterales</taxon>
        <taxon>Roseobacteraceae</taxon>
        <taxon>Dinoroseobacter</taxon>
    </lineage>
</organism>
<evidence type="ECO:0000250" key="1"/>
<evidence type="ECO:0000255" key="2">
    <source>
        <dbReference type="HAMAP-Rule" id="MF_01346"/>
    </source>
</evidence>
<sequence length="512" mass="55053">MGIQAAEISAILKEQIKNFGQEAEVAEVGRVLSVGDGIARVHGLDNVQAGEMVEFPGGIRGMALNLEIDNVGVVIFGSDRDIKEGDIVKRTKSIVDVPVGDALLGRVVDGLGNPLDGKGPIETTERSIADVKAPGIIPRKSVHEPMATGLKSVDAMIPIGRGQRELIIGDRQTGKTAVALDTILNQKAYNDAAGDDESKKLYCVYVAVGQKRSTVAQLVKKLEETGAIEYSIVVAATASDPAPMQFLAPYAATSMAEFFRDNGRHALIIYDDLSKQAVSYRQMSLLLRRPPGREAYPGDVFYLHSRLLERSAKLGDDHGNGSLTALPIIETQGGDVSAFIPTNVISITDGQIFLETELFYQGIRPAVNTGLSVSRVGSSAQTNAMKSVAGPVKLELAQYREMAAFAQFGSDLDAATQQLLNRGARLTELMKQPQYSPLTNAEIVCVIFAGTKGYLDKIPVGDVGRYEKGLLAHLRGKHKGLLDYITKEDPKIKGEAEDKIRAALDEFAATFA</sequence>
<name>ATPA2_DINSH</name>
<comment type="function">
    <text evidence="2">Produces ATP from ADP in the presence of a proton gradient across the membrane. The alpha chain is a regulatory subunit.</text>
</comment>
<comment type="catalytic activity">
    <reaction evidence="2">
        <text>ATP + H2O + 4 H(+)(in) = ADP + phosphate + 5 H(+)(out)</text>
        <dbReference type="Rhea" id="RHEA:57720"/>
        <dbReference type="ChEBI" id="CHEBI:15377"/>
        <dbReference type="ChEBI" id="CHEBI:15378"/>
        <dbReference type="ChEBI" id="CHEBI:30616"/>
        <dbReference type="ChEBI" id="CHEBI:43474"/>
        <dbReference type="ChEBI" id="CHEBI:456216"/>
        <dbReference type="EC" id="7.1.2.2"/>
    </reaction>
</comment>
<comment type="subunit">
    <text evidence="1">F-type ATPases have 2 components, CF(1) - the catalytic core - and CF(0) - the membrane proton channel. CF(1) has five subunits: alpha(3), beta(3), gamma(1), delta(1), epsilon(1). CF(0) has four main subunits: a(1), b(1), b'(1) and c(9-12) (By similarity).</text>
</comment>
<comment type="subcellular location">
    <subcellularLocation>
        <location evidence="2">Cell inner membrane</location>
        <topology evidence="2">Peripheral membrane protein</topology>
    </subcellularLocation>
</comment>
<comment type="similarity">
    <text evidence="2">Belongs to the ATPase alpha/beta chains family.</text>
</comment>
<reference key="1">
    <citation type="journal article" date="2010" name="ISME J.">
        <title>The complete genome sequence of the algal symbiont Dinoroseobacter shibae: a hitchhiker's guide to life in the sea.</title>
        <authorList>
            <person name="Wagner-Dobler I."/>
            <person name="Ballhausen B."/>
            <person name="Berger M."/>
            <person name="Brinkhoff T."/>
            <person name="Buchholz I."/>
            <person name="Bunk B."/>
            <person name="Cypionka H."/>
            <person name="Daniel R."/>
            <person name="Drepper T."/>
            <person name="Gerdts G."/>
            <person name="Hahnke S."/>
            <person name="Han C."/>
            <person name="Jahn D."/>
            <person name="Kalhoefer D."/>
            <person name="Kiss H."/>
            <person name="Klenk H.P."/>
            <person name="Kyrpides N."/>
            <person name="Liebl W."/>
            <person name="Liesegang H."/>
            <person name="Meincke L."/>
            <person name="Pati A."/>
            <person name="Petersen J."/>
            <person name="Piekarski T."/>
            <person name="Pommerenke C."/>
            <person name="Pradella S."/>
            <person name="Pukall R."/>
            <person name="Rabus R."/>
            <person name="Stackebrandt E."/>
            <person name="Thole S."/>
            <person name="Thompson L."/>
            <person name="Tielen P."/>
            <person name="Tomasch J."/>
            <person name="von Jan M."/>
            <person name="Wanphrut N."/>
            <person name="Wichels A."/>
            <person name="Zech H."/>
            <person name="Simon M."/>
        </authorList>
    </citation>
    <scope>NUCLEOTIDE SEQUENCE [LARGE SCALE GENOMIC DNA]</scope>
    <source>
        <strain>DSM 16493 / NCIMB 14021 / DFL 12</strain>
    </source>
</reference>
<dbReference type="EC" id="7.1.2.2" evidence="2"/>
<dbReference type="EMBL" id="CP000830">
    <property type="protein sequence ID" value="ABV94669.1"/>
    <property type="molecule type" value="Genomic_DNA"/>
</dbReference>
<dbReference type="RefSeq" id="WP_012179597.1">
    <property type="nucleotide sequence ID" value="NC_009952.1"/>
</dbReference>
<dbReference type="SMR" id="A8LJR6"/>
<dbReference type="STRING" id="398580.Dshi_2936"/>
<dbReference type="KEGG" id="dsh:Dshi_2936"/>
<dbReference type="eggNOG" id="COG0056">
    <property type="taxonomic scope" value="Bacteria"/>
</dbReference>
<dbReference type="HOGENOM" id="CLU_010091_2_1_5"/>
<dbReference type="OrthoDB" id="9803053at2"/>
<dbReference type="Proteomes" id="UP000006833">
    <property type="component" value="Chromosome"/>
</dbReference>
<dbReference type="GO" id="GO:0005886">
    <property type="term" value="C:plasma membrane"/>
    <property type="evidence" value="ECO:0007669"/>
    <property type="project" value="UniProtKB-SubCell"/>
</dbReference>
<dbReference type="GO" id="GO:0045259">
    <property type="term" value="C:proton-transporting ATP synthase complex"/>
    <property type="evidence" value="ECO:0007669"/>
    <property type="project" value="UniProtKB-KW"/>
</dbReference>
<dbReference type="GO" id="GO:0043531">
    <property type="term" value="F:ADP binding"/>
    <property type="evidence" value="ECO:0007669"/>
    <property type="project" value="TreeGrafter"/>
</dbReference>
<dbReference type="GO" id="GO:0005524">
    <property type="term" value="F:ATP binding"/>
    <property type="evidence" value="ECO:0007669"/>
    <property type="project" value="UniProtKB-UniRule"/>
</dbReference>
<dbReference type="GO" id="GO:0046933">
    <property type="term" value="F:proton-transporting ATP synthase activity, rotational mechanism"/>
    <property type="evidence" value="ECO:0007669"/>
    <property type="project" value="UniProtKB-UniRule"/>
</dbReference>
<dbReference type="CDD" id="cd18113">
    <property type="entry name" value="ATP-synt_F1_alpha_C"/>
    <property type="match status" value="1"/>
</dbReference>
<dbReference type="CDD" id="cd18116">
    <property type="entry name" value="ATP-synt_F1_alpha_N"/>
    <property type="match status" value="1"/>
</dbReference>
<dbReference type="CDD" id="cd01132">
    <property type="entry name" value="F1-ATPase_alpha_CD"/>
    <property type="match status" value="1"/>
</dbReference>
<dbReference type="FunFam" id="1.20.150.20:FF:000001">
    <property type="entry name" value="ATP synthase subunit alpha"/>
    <property type="match status" value="1"/>
</dbReference>
<dbReference type="FunFam" id="2.40.30.20:FF:000001">
    <property type="entry name" value="ATP synthase subunit alpha"/>
    <property type="match status" value="1"/>
</dbReference>
<dbReference type="FunFam" id="3.40.50.300:FF:002432">
    <property type="entry name" value="ATP synthase subunit alpha, mitochondrial"/>
    <property type="match status" value="1"/>
</dbReference>
<dbReference type="Gene3D" id="2.40.30.20">
    <property type="match status" value="1"/>
</dbReference>
<dbReference type="Gene3D" id="1.20.150.20">
    <property type="entry name" value="ATP synthase alpha/beta chain, C-terminal domain"/>
    <property type="match status" value="1"/>
</dbReference>
<dbReference type="Gene3D" id="3.40.50.300">
    <property type="entry name" value="P-loop containing nucleotide triphosphate hydrolases"/>
    <property type="match status" value="1"/>
</dbReference>
<dbReference type="HAMAP" id="MF_01346">
    <property type="entry name" value="ATP_synth_alpha_bact"/>
    <property type="match status" value="1"/>
</dbReference>
<dbReference type="InterPro" id="IPR023366">
    <property type="entry name" value="ATP_synth_asu-like_sf"/>
</dbReference>
<dbReference type="InterPro" id="IPR000793">
    <property type="entry name" value="ATP_synth_asu_C"/>
</dbReference>
<dbReference type="InterPro" id="IPR038376">
    <property type="entry name" value="ATP_synth_asu_C_sf"/>
</dbReference>
<dbReference type="InterPro" id="IPR033732">
    <property type="entry name" value="ATP_synth_F1_a_nt-bd_dom"/>
</dbReference>
<dbReference type="InterPro" id="IPR005294">
    <property type="entry name" value="ATP_synth_F1_asu"/>
</dbReference>
<dbReference type="InterPro" id="IPR020003">
    <property type="entry name" value="ATPase_a/bsu_AS"/>
</dbReference>
<dbReference type="InterPro" id="IPR004100">
    <property type="entry name" value="ATPase_F1/V1/A1_a/bsu_N"/>
</dbReference>
<dbReference type="InterPro" id="IPR036121">
    <property type="entry name" value="ATPase_F1/V1/A1_a/bsu_N_sf"/>
</dbReference>
<dbReference type="InterPro" id="IPR000194">
    <property type="entry name" value="ATPase_F1/V1/A1_a/bsu_nucl-bd"/>
</dbReference>
<dbReference type="InterPro" id="IPR027417">
    <property type="entry name" value="P-loop_NTPase"/>
</dbReference>
<dbReference type="NCBIfam" id="TIGR00962">
    <property type="entry name" value="atpA"/>
    <property type="match status" value="1"/>
</dbReference>
<dbReference type="NCBIfam" id="NF009884">
    <property type="entry name" value="PRK13343.1"/>
    <property type="match status" value="1"/>
</dbReference>
<dbReference type="PANTHER" id="PTHR48082">
    <property type="entry name" value="ATP SYNTHASE SUBUNIT ALPHA, MITOCHONDRIAL"/>
    <property type="match status" value="1"/>
</dbReference>
<dbReference type="PANTHER" id="PTHR48082:SF2">
    <property type="entry name" value="ATP SYNTHASE SUBUNIT ALPHA, MITOCHONDRIAL"/>
    <property type="match status" value="1"/>
</dbReference>
<dbReference type="Pfam" id="PF00006">
    <property type="entry name" value="ATP-synt_ab"/>
    <property type="match status" value="1"/>
</dbReference>
<dbReference type="Pfam" id="PF00306">
    <property type="entry name" value="ATP-synt_ab_C"/>
    <property type="match status" value="1"/>
</dbReference>
<dbReference type="Pfam" id="PF02874">
    <property type="entry name" value="ATP-synt_ab_N"/>
    <property type="match status" value="1"/>
</dbReference>
<dbReference type="PIRSF" id="PIRSF039088">
    <property type="entry name" value="F_ATPase_subunit_alpha"/>
    <property type="match status" value="1"/>
</dbReference>
<dbReference type="SUPFAM" id="SSF47917">
    <property type="entry name" value="C-terminal domain of alpha and beta subunits of F1 ATP synthase"/>
    <property type="match status" value="1"/>
</dbReference>
<dbReference type="SUPFAM" id="SSF50615">
    <property type="entry name" value="N-terminal domain of alpha and beta subunits of F1 ATP synthase"/>
    <property type="match status" value="1"/>
</dbReference>
<dbReference type="SUPFAM" id="SSF52540">
    <property type="entry name" value="P-loop containing nucleoside triphosphate hydrolases"/>
    <property type="match status" value="1"/>
</dbReference>
<dbReference type="PROSITE" id="PS00152">
    <property type="entry name" value="ATPASE_ALPHA_BETA"/>
    <property type="match status" value="1"/>
</dbReference>
<proteinExistence type="inferred from homology"/>